<keyword id="KW-0256">Endoplasmic reticulum</keyword>
<keyword id="KW-0378">Hydrolase</keyword>
<keyword id="KW-0472">Membrane</keyword>
<keyword id="KW-0645">Protease</keyword>
<keyword id="KW-1185">Reference proteome</keyword>
<keyword id="KW-0735">Signal-anchor</keyword>
<keyword id="KW-0812">Transmembrane</keyword>
<keyword id="KW-1133">Transmembrane helix</keyword>
<gene>
    <name type="primary">SEC11</name>
    <name type="ORF">Lema_P074660</name>
</gene>
<proteinExistence type="inferred from homology"/>
<comment type="function">
    <text evidence="1 2">Catalytic component of the signal peptidase complex (SPC) which catalyzes the cleavage of N-terminal signal sequences from nascent proteins as they are translocated into the lumen of the endoplasmic reticulum (By similarity). Specifically cleaves N-terminal signal peptides that contain a hydrophobic alpha-helix (h-region) shorter than 18-20 amino acids (By similarity).</text>
</comment>
<comment type="catalytic activity">
    <reaction evidence="1">
        <text>Cleavage of hydrophobic, N-terminal signal or leader sequences from secreted and periplasmic proteins.</text>
        <dbReference type="EC" id="3.4.21.89"/>
    </reaction>
</comment>
<comment type="subunit">
    <text evidence="1 2">Component of the signal peptidase complex (SPC) composed of a catalytic subunit SEC11 and three accessory subunits SPC1, SPC2 and SPC3 (By similarity). The complex induces a local thinning of the ER membrane which is used to measure the length of the signal peptide (SP) h-region of protein substrates. This ensures the selectivity of the complex towards h-regions shorter than 18-20 amino acids (By similarity). SPC associates with the translocon complex (By similarity).</text>
</comment>
<comment type="subcellular location">
    <subcellularLocation>
        <location evidence="1">Endoplasmic reticulum membrane</location>
        <topology evidence="1">Single-pass type II membrane protein</topology>
    </subcellularLocation>
</comment>
<comment type="domain">
    <text evidence="2">The C-terminal short (CTS) helix is essential for catalytic activity. It may be accommodated as a transmembrane helix in the thinned membrane environment of the complex, similarly to the signal peptide in the complex substrates.</text>
</comment>
<comment type="similarity">
    <text evidence="4">Belongs to the peptidase S26B family.</text>
</comment>
<protein>
    <recommendedName>
        <fullName>Signal peptidase complex catalytic subunit SEC11</fullName>
        <ecNumber evidence="1">3.4.21.89</ecNumber>
    </recommendedName>
    <alternativeName>
        <fullName>Signal peptidase I</fullName>
    </alternativeName>
</protein>
<evidence type="ECO:0000250" key="1">
    <source>
        <dbReference type="UniProtKB" id="P15367"/>
    </source>
</evidence>
<evidence type="ECO:0000250" key="2">
    <source>
        <dbReference type="UniProtKB" id="P67812"/>
    </source>
</evidence>
<evidence type="ECO:0000255" key="3"/>
<evidence type="ECO:0000305" key="4"/>
<reference key="1">
    <citation type="journal article" date="2011" name="Nat. Commun.">
        <title>Effector diversification within compartments of the Leptosphaeria maculans genome affected by Repeat-Induced Point mutations.</title>
        <authorList>
            <person name="Rouxel T."/>
            <person name="Grandaubert J."/>
            <person name="Hane J.K."/>
            <person name="Hoede C."/>
            <person name="van de Wouw A.P."/>
            <person name="Couloux A."/>
            <person name="Dominguez V."/>
            <person name="Anthouard V."/>
            <person name="Bally P."/>
            <person name="Bourras S."/>
            <person name="Cozijnsen A.J."/>
            <person name="Ciuffetti L.M."/>
            <person name="Degrave A."/>
            <person name="Dilmaghani A."/>
            <person name="Duret L."/>
            <person name="Fudal I."/>
            <person name="Goodwin S.B."/>
            <person name="Gout L."/>
            <person name="Glaser N."/>
            <person name="Linglin J."/>
            <person name="Kema G.H.J."/>
            <person name="Lapalu N."/>
            <person name="Lawrence C.B."/>
            <person name="May K."/>
            <person name="Meyer M."/>
            <person name="Ollivier B."/>
            <person name="Poulain J."/>
            <person name="Schoch C.L."/>
            <person name="Simon A."/>
            <person name="Spatafora J.W."/>
            <person name="Stachowiak A."/>
            <person name="Turgeon B.G."/>
            <person name="Tyler B.M."/>
            <person name="Vincent D."/>
            <person name="Weissenbach J."/>
            <person name="Amselem J."/>
            <person name="Quesneville H."/>
            <person name="Oliver R.P."/>
            <person name="Wincker P."/>
            <person name="Balesdent M.-H."/>
            <person name="Howlett B.J."/>
        </authorList>
    </citation>
    <scope>NUCLEOTIDE SEQUENCE [LARGE SCALE GENOMIC DNA]</scope>
    <source>
        <strain>JN3 / isolate v23.1.3 / race Av1-4-5-6-7-8</strain>
    </source>
</reference>
<organism>
    <name type="scientific">Leptosphaeria maculans (strain JN3 / isolate v23.1.3 / race Av1-4-5-6-7-8)</name>
    <name type="common">Blackleg fungus</name>
    <name type="synonym">Phoma lingam</name>
    <dbReference type="NCBI Taxonomy" id="985895"/>
    <lineage>
        <taxon>Eukaryota</taxon>
        <taxon>Fungi</taxon>
        <taxon>Dikarya</taxon>
        <taxon>Ascomycota</taxon>
        <taxon>Pezizomycotina</taxon>
        <taxon>Dothideomycetes</taxon>
        <taxon>Pleosporomycetidae</taxon>
        <taxon>Pleosporales</taxon>
        <taxon>Pleosporineae</taxon>
        <taxon>Leptosphaeriaceae</taxon>
        <taxon>Plenodomus</taxon>
        <taxon>Plenodomus lingam/Leptosphaeria maculans species complex</taxon>
    </lineage>
</organism>
<dbReference type="EC" id="3.4.21.89" evidence="1"/>
<dbReference type="EMBL" id="FP929137">
    <property type="protein sequence ID" value="CBX99877.1"/>
    <property type="molecule type" value="Genomic_DNA"/>
</dbReference>
<dbReference type="RefSeq" id="XP_003843356.1">
    <property type="nucleotide sequence ID" value="XM_003843308.1"/>
</dbReference>
<dbReference type="SMR" id="E5A8D2"/>
<dbReference type="FunCoup" id="E5A8D2">
    <property type="interactions" value="618"/>
</dbReference>
<dbReference type="STRING" id="985895.E5A8D2"/>
<dbReference type="MEROPS" id="S26.010"/>
<dbReference type="EnsemblFungi" id="CBX99877">
    <property type="protein sequence ID" value="CBX99877"/>
    <property type="gene ID" value="LEMA_P074660.1"/>
</dbReference>
<dbReference type="GeneID" id="13292699"/>
<dbReference type="VEuPathDB" id="FungiDB:LEMA_P074660.1"/>
<dbReference type="eggNOG" id="KOG3342">
    <property type="taxonomic scope" value="Eukaryota"/>
</dbReference>
<dbReference type="HOGENOM" id="CLU_089996_0_0_1"/>
<dbReference type="InParanoid" id="E5A8D2"/>
<dbReference type="OMA" id="ILMNEYP"/>
<dbReference type="OrthoDB" id="10257561at2759"/>
<dbReference type="Proteomes" id="UP000002668">
    <property type="component" value="Genome"/>
</dbReference>
<dbReference type="GO" id="GO:0005787">
    <property type="term" value="C:signal peptidase complex"/>
    <property type="evidence" value="ECO:0007669"/>
    <property type="project" value="EnsemblFungi"/>
</dbReference>
<dbReference type="GO" id="GO:0004252">
    <property type="term" value="F:serine-type endopeptidase activity"/>
    <property type="evidence" value="ECO:0007669"/>
    <property type="project" value="UniProtKB-EC"/>
</dbReference>
<dbReference type="GO" id="GO:0045047">
    <property type="term" value="P:protein targeting to ER"/>
    <property type="evidence" value="ECO:0007669"/>
    <property type="project" value="EnsemblFungi"/>
</dbReference>
<dbReference type="GO" id="GO:0006465">
    <property type="term" value="P:signal peptide processing"/>
    <property type="evidence" value="ECO:0007669"/>
    <property type="project" value="EnsemblFungi"/>
</dbReference>
<dbReference type="CDD" id="cd06462">
    <property type="entry name" value="Peptidase_S24_S26"/>
    <property type="match status" value="1"/>
</dbReference>
<dbReference type="InterPro" id="IPR036286">
    <property type="entry name" value="LexA/Signal_pep-like_sf"/>
</dbReference>
<dbReference type="InterPro" id="IPR019756">
    <property type="entry name" value="Pept_S26A_signal_pept_1_Ser-AS"/>
</dbReference>
<dbReference type="InterPro" id="IPR001733">
    <property type="entry name" value="Peptidase_S26B"/>
</dbReference>
<dbReference type="NCBIfam" id="TIGR02228">
    <property type="entry name" value="sigpep_I_arch"/>
    <property type="match status" value="1"/>
</dbReference>
<dbReference type="PANTHER" id="PTHR10806">
    <property type="entry name" value="SIGNAL PEPTIDASE COMPLEX CATALYTIC SUBUNIT SEC11"/>
    <property type="match status" value="1"/>
</dbReference>
<dbReference type="PANTHER" id="PTHR10806:SF6">
    <property type="entry name" value="SIGNAL PEPTIDASE COMPLEX CATALYTIC SUBUNIT SEC11"/>
    <property type="match status" value="1"/>
</dbReference>
<dbReference type="PRINTS" id="PR00728">
    <property type="entry name" value="SIGNALPTASE"/>
</dbReference>
<dbReference type="SUPFAM" id="SSF51306">
    <property type="entry name" value="LexA/Signal peptidase"/>
    <property type="match status" value="1"/>
</dbReference>
<dbReference type="PROSITE" id="PS00501">
    <property type="entry name" value="SPASE_I_1"/>
    <property type="match status" value="1"/>
</dbReference>
<name>SEC11_LEPMJ</name>
<sequence length="173" mass="19034">MLGVSGMQPRQLAAQILNFALVLSTAFMMWKGLSVVSDSSSPIVVVLSGSMEPAFQRGDLLFLWNRGLDTQVGEIVVYNVKGKDIPIVHRVVRRYGGGKTPLRLLTKGDNNIADDTELYATSQSFLTRKEDVVGSVVGFIPFVGYVTILLSENPWMKQVMLGLMGVMVVLQRE</sequence>
<feature type="chain" id="PRO_0000412334" description="Signal peptidase complex catalytic subunit SEC11">
    <location>
        <begin position="1"/>
        <end position="173"/>
    </location>
</feature>
<feature type="topological domain" description="Cytoplasmic" evidence="4">
    <location>
        <begin position="1"/>
        <end position="15"/>
    </location>
</feature>
<feature type="transmembrane region" description="Helical; Signal-anchor for type II membrane protein" evidence="3">
    <location>
        <begin position="16"/>
        <end position="36"/>
    </location>
</feature>
<feature type="topological domain" description="Lumenal" evidence="4">
    <location>
        <begin position="37"/>
        <end position="173"/>
    </location>
</feature>
<feature type="region of interest" description="C-terminal short (CTS) helix" evidence="2">
    <location>
        <begin position="159"/>
        <end position="170"/>
    </location>
</feature>
<feature type="active site" description="Charge relay system" evidence="1">
    <location>
        <position position="50"/>
    </location>
</feature>
<feature type="active site" description="Charge relay system" evidence="1">
    <location>
        <position position="89"/>
    </location>
</feature>
<feature type="active site" description="Charge relay system" evidence="1">
    <location>
        <position position="115"/>
    </location>
</feature>
<accession>E5A8D2</accession>